<organism>
    <name type="scientific">Bacillus velezensis (strain DSM 23117 / BGSC 10A6 / LMG 26770 / FZB42)</name>
    <name type="common">Bacillus amyloliquefaciens subsp. plantarum</name>
    <dbReference type="NCBI Taxonomy" id="326423"/>
    <lineage>
        <taxon>Bacteria</taxon>
        <taxon>Bacillati</taxon>
        <taxon>Bacillota</taxon>
        <taxon>Bacilli</taxon>
        <taxon>Bacillales</taxon>
        <taxon>Bacillaceae</taxon>
        <taxon>Bacillus</taxon>
        <taxon>Bacillus amyloliquefaciens group</taxon>
    </lineage>
</organism>
<accession>A7Z6J7</accession>
<keyword id="KW-0963">Cytoplasm</keyword>
<keyword id="KW-0269">Exonuclease</keyword>
<keyword id="KW-0378">Hydrolase</keyword>
<keyword id="KW-0540">Nuclease</keyword>
<protein>
    <recommendedName>
        <fullName evidence="1">Exodeoxyribonuclease 7 small subunit</fullName>
        <ecNumber evidence="1">3.1.11.6</ecNumber>
    </recommendedName>
    <alternativeName>
        <fullName evidence="1">Exodeoxyribonuclease VII small subunit</fullName>
        <shortName evidence="1">Exonuclease VII small subunit</shortName>
    </alternativeName>
</protein>
<evidence type="ECO:0000255" key="1">
    <source>
        <dbReference type="HAMAP-Rule" id="MF_00337"/>
    </source>
</evidence>
<reference key="1">
    <citation type="journal article" date="2007" name="Nat. Biotechnol.">
        <title>Comparative analysis of the complete genome sequence of the plant growth-promoting bacterium Bacillus amyloliquefaciens FZB42.</title>
        <authorList>
            <person name="Chen X.H."/>
            <person name="Koumoutsi A."/>
            <person name="Scholz R."/>
            <person name="Eisenreich A."/>
            <person name="Schneider K."/>
            <person name="Heinemeyer I."/>
            <person name="Morgenstern B."/>
            <person name="Voss B."/>
            <person name="Hess W.R."/>
            <person name="Reva O."/>
            <person name="Junge H."/>
            <person name="Voigt B."/>
            <person name="Jungblut P.R."/>
            <person name="Vater J."/>
            <person name="Suessmuth R."/>
            <person name="Liesegang H."/>
            <person name="Strittmatter A."/>
            <person name="Gottschalk G."/>
            <person name="Borriss R."/>
        </authorList>
    </citation>
    <scope>NUCLEOTIDE SEQUENCE [LARGE SCALE GENOMIC DNA]</scope>
    <source>
        <strain>DSM 23117 / BGSC 10A6 / LMG 26770 / FZB42</strain>
    </source>
</reference>
<gene>
    <name evidence="1" type="primary">xseB</name>
    <name type="ordered locus">RBAM_022620</name>
</gene>
<sequence length="84" mass="9565">MTETKKSEELTFEEAMKGLEGIVAKLEEGDVPLEQAINYFQEGMALSKMCHEKLQHVEKQMDFILKDNGELAPFSVQEEDEGDK</sequence>
<name>EX7S_BACVZ</name>
<proteinExistence type="inferred from homology"/>
<dbReference type="EC" id="3.1.11.6" evidence="1"/>
<dbReference type="EMBL" id="CP000560">
    <property type="protein sequence ID" value="ABS74623.1"/>
    <property type="molecule type" value="Genomic_DNA"/>
</dbReference>
<dbReference type="RefSeq" id="WP_007408352.1">
    <property type="nucleotide sequence ID" value="NC_009725.2"/>
</dbReference>
<dbReference type="SMR" id="A7Z6J7"/>
<dbReference type="GeneID" id="93081400"/>
<dbReference type="KEGG" id="bay:RBAM_022620"/>
<dbReference type="HOGENOM" id="CLU_145918_3_1_9"/>
<dbReference type="Proteomes" id="UP000001120">
    <property type="component" value="Chromosome"/>
</dbReference>
<dbReference type="GO" id="GO:0005829">
    <property type="term" value="C:cytosol"/>
    <property type="evidence" value="ECO:0007669"/>
    <property type="project" value="TreeGrafter"/>
</dbReference>
<dbReference type="GO" id="GO:0009318">
    <property type="term" value="C:exodeoxyribonuclease VII complex"/>
    <property type="evidence" value="ECO:0007669"/>
    <property type="project" value="InterPro"/>
</dbReference>
<dbReference type="GO" id="GO:0008855">
    <property type="term" value="F:exodeoxyribonuclease VII activity"/>
    <property type="evidence" value="ECO:0007669"/>
    <property type="project" value="UniProtKB-UniRule"/>
</dbReference>
<dbReference type="GO" id="GO:0006308">
    <property type="term" value="P:DNA catabolic process"/>
    <property type="evidence" value="ECO:0007669"/>
    <property type="project" value="UniProtKB-UniRule"/>
</dbReference>
<dbReference type="Gene3D" id="1.10.287.1040">
    <property type="entry name" value="Exonuclease VII, small subunit"/>
    <property type="match status" value="1"/>
</dbReference>
<dbReference type="HAMAP" id="MF_00337">
    <property type="entry name" value="Exonuc_7_S"/>
    <property type="match status" value="1"/>
</dbReference>
<dbReference type="InterPro" id="IPR003761">
    <property type="entry name" value="Exonuc_VII_S"/>
</dbReference>
<dbReference type="InterPro" id="IPR037004">
    <property type="entry name" value="Exonuc_VII_ssu_sf"/>
</dbReference>
<dbReference type="NCBIfam" id="NF010666">
    <property type="entry name" value="PRK14063.1"/>
    <property type="match status" value="1"/>
</dbReference>
<dbReference type="NCBIfam" id="TIGR01280">
    <property type="entry name" value="xseB"/>
    <property type="match status" value="1"/>
</dbReference>
<dbReference type="PANTHER" id="PTHR34137">
    <property type="entry name" value="EXODEOXYRIBONUCLEASE 7 SMALL SUBUNIT"/>
    <property type="match status" value="1"/>
</dbReference>
<dbReference type="PANTHER" id="PTHR34137:SF1">
    <property type="entry name" value="EXODEOXYRIBONUCLEASE 7 SMALL SUBUNIT"/>
    <property type="match status" value="1"/>
</dbReference>
<dbReference type="Pfam" id="PF02609">
    <property type="entry name" value="Exonuc_VII_S"/>
    <property type="match status" value="1"/>
</dbReference>
<dbReference type="PIRSF" id="PIRSF006488">
    <property type="entry name" value="Exonuc_VII_S"/>
    <property type="match status" value="1"/>
</dbReference>
<dbReference type="SUPFAM" id="SSF116842">
    <property type="entry name" value="XseB-like"/>
    <property type="match status" value="1"/>
</dbReference>
<comment type="function">
    <text evidence="1">Bidirectionally degrades single-stranded DNA into large acid-insoluble oligonucleotides, which are then degraded further into small acid-soluble oligonucleotides.</text>
</comment>
<comment type="catalytic activity">
    <reaction evidence="1">
        <text>Exonucleolytic cleavage in either 5'- to 3'- or 3'- to 5'-direction to yield nucleoside 5'-phosphates.</text>
        <dbReference type="EC" id="3.1.11.6"/>
    </reaction>
</comment>
<comment type="subunit">
    <text evidence="1">Heterooligomer composed of large and small subunits.</text>
</comment>
<comment type="subcellular location">
    <subcellularLocation>
        <location evidence="1">Cytoplasm</location>
    </subcellularLocation>
</comment>
<comment type="similarity">
    <text evidence="1">Belongs to the XseB family.</text>
</comment>
<feature type="chain" id="PRO_1000119896" description="Exodeoxyribonuclease 7 small subunit">
    <location>
        <begin position="1"/>
        <end position="84"/>
    </location>
</feature>